<name>MNTR_BACVZ</name>
<accession>A7Z6L9</accession>
<keyword id="KW-0010">Activator</keyword>
<keyword id="KW-0963">Cytoplasm</keyword>
<keyword id="KW-0238">DNA-binding</keyword>
<keyword id="KW-0464">Manganese</keyword>
<keyword id="KW-0479">Metal-binding</keyword>
<keyword id="KW-0678">Repressor</keyword>
<keyword id="KW-0804">Transcription</keyword>
<keyword id="KW-0805">Transcription regulation</keyword>
<comment type="function">
    <text evidence="1">Central regulator of manganese homeostasis.</text>
</comment>
<comment type="activity regulation">
    <text evidence="1">DNA binding is strongly activated by Mn(2+).</text>
</comment>
<comment type="subunit">
    <text evidence="1">Homodimer.</text>
</comment>
<comment type="subcellular location">
    <subcellularLocation>
        <location evidence="1">Cytoplasm</location>
    </subcellularLocation>
</comment>
<comment type="similarity">
    <text evidence="1">Belongs to the DtxR/MntR family.</text>
</comment>
<gene>
    <name evidence="1" type="primary">mntR</name>
    <name type="ordered locus">RBAM_022840</name>
</gene>
<evidence type="ECO:0000255" key="1">
    <source>
        <dbReference type="HAMAP-Rule" id="MF_00732"/>
    </source>
</evidence>
<feature type="chain" id="PRO_1000062112" description="HTH-type transcriptional regulator MntR">
    <location>
        <begin position="1"/>
        <end position="142"/>
    </location>
</feature>
<feature type="domain" description="HTH dtxR-type" evidence="1">
    <location>
        <begin position="1"/>
        <end position="63"/>
    </location>
</feature>
<feature type="binding site" evidence="1">
    <location>
        <position position="8"/>
    </location>
    <ligand>
        <name>Mn(2+)</name>
        <dbReference type="ChEBI" id="CHEBI:29035"/>
        <label>1</label>
    </ligand>
</feature>
<feature type="binding site" evidence="1">
    <location>
        <position position="11"/>
    </location>
    <ligand>
        <name>Mn(2+)</name>
        <dbReference type="ChEBI" id="CHEBI:29035"/>
        <label>2</label>
    </ligand>
</feature>
<feature type="binding site" evidence="1">
    <location>
        <position position="77"/>
    </location>
    <ligand>
        <name>Mn(2+)</name>
        <dbReference type="ChEBI" id="CHEBI:29035"/>
        <label>2</label>
    </ligand>
</feature>
<feature type="binding site" evidence="1">
    <location>
        <position position="99"/>
    </location>
    <ligand>
        <name>Mn(2+)</name>
        <dbReference type="ChEBI" id="CHEBI:29035"/>
        <label>1</label>
    </ligand>
</feature>
<feature type="binding site" evidence="1">
    <location>
        <position position="99"/>
    </location>
    <ligand>
        <name>Mn(2+)</name>
        <dbReference type="ChEBI" id="CHEBI:29035"/>
        <label>2</label>
    </ligand>
</feature>
<feature type="binding site" evidence="1">
    <location>
        <position position="102"/>
    </location>
    <ligand>
        <name>Mn(2+)</name>
        <dbReference type="ChEBI" id="CHEBI:29035"/>
        <label>1</label>
    </ligand>
</feature>
<feature type="binding site" evidence="1">
    <location>
        <position position="102"/>
    </location>
    <ligand>
        <name>Mn(2+)</name>
        <dbReference type="ChEBI" id="CHEBI:29035"/>
        <label>2</label>
    </ligand>
</feature>
<feature type="binding site" evidence="1">
    <location>
        <position position="103"/>
    </location>
    <ligand>
        <name>Mn(2+)</name>
        <dbReference type="ChEBI" id="CHEBI:29035"/>
        <label>1</label>
    </ligand>
</feature>
<dbReference type="EMBL" id="CP000560">
    <property type="protein sequence ID" value="ABS74645.1"/>
    <property type="molecule type" value="Genomic_DNA"/>
</dbReference>
<dbReference type="RefSeq" id="WP_007408338.1">
    <property type="nucleotide sequence ID" value="NC_009725.2"/>
</dbReference>
<dbReference type="SMR" id="A7Z6L9"/>
<dbReference type="GeneID" id="93081422"/>
<dbReference type="KEGG" id="bay:RBAM_022840"/>
<dbReference type="HOGENOM" id="CLU_069532_3_0_9"/>
<dbReference type="Proteomes" id="UP000001120">
    <property type="component" value="Chromosome"/>
</dbReference>
<dbReference type="GO" id="GO:0005737">
    <property type="term" value="C:cytoplasm"/>
    <property type="evidence" value="ECO:0007669"/>
    <property type="project" value="UniProtKB-SubCell"/>
</dbReference>
<dbReference type="GO" id="GO:0003677">
    <property type="term" value="F:DNA binding"/>
    <property type="evidence" value="ECO:0007669"/>
    <property type="project" value="UniProtKB-KW"/>
</dbReference>
<dbReference type="GO" id="GO:0003700">
    <property type="term" value="F:DNA-binding transcription factor activity"/>
    <property type="evidence" value="ECO:0007669"/>
    <property type="project" value="UniProtKB-UniRule"/>
</dbReference>
<dbReference type="GO" id="GO:0030145">
    <property type="term" value="F:manganese ion binding"/>
    <property type="evidence" value="ECO:0007669"/>
    <property type="project" value="UniProtKB-UniRule"/>
</dbReference>
<dbReference type="GO" id="GO:0046983">
    <property type="term" value="F:protein dimerization activity"/>
    <property type="evidence" value="ECO:0007669"/>
    <property type="project" value="InterPro"/>
</dbReference>
<dbReference type="GO" id="GO:0030026">
    <property type="term" value="P:intracellular manganese ion homeostasis"/>
    <property type="evidence" value="ECO:0007669"/>
    <property type="project" value="UniProtKB-UniRule"/>
</dbReference>
<dbReference type="FunFam" id="1.10.10.10:FF:000189">
    <property type="entry name" value="HTH-type transcriptional regulator MntR"/>
    <property type="match status" value="1"/>
</dbReference>
<dbReference type="FunFam" id="1.10.60.10:FF:000003">
    <property type="entry name" value="HTH-type transcriptional regulator MntR"/>
    <property type="match status" value="1"/>
</dbReference>
<dbReference type="Gene3D" id="1.10.60.10">
    <property type="entry name" value="Iron dependent repressor, metal binding and dimerisation domain"/>
    <property type="match status" value="1"/>
</dbReference>
<dbReference type="Gene3D" id="1.10.10.10">
    <property type="entry name" value="Winged helix-like DNA-binding domain superfamily/Winged helix DNA-binding domain"/>
    <property type="match status" value="1"/>
</dbReference>
<dbReference type="HAMAP" id="MF_00732">
    <property type="entry name" value="HTH_MntR"/>
    <property type="match status" value="1"/>
</dbReference>
<dbReference type="InterPro" id="IPR050536">
    <property type="entry name" value="DtxR_MntR_Metal-Reg"/>
</dbReference>
<dbReference type="InterPro" id="IPR001367">
    <property type="entry name" value="Fe_dep_repressor"/>
</dbReference>
<dbReference type="InterPro" id="IPR036421">
    <property type="entry name" value="Fe_dep_repressor_sf"/>
</dbReference>
<dbReference type="InterPro" id="IPR022687">
    <property type="entry name" value="HTH_DTXR"/>
</dbReference>
<dbReference type="InterPro" id="IPR022897">
    <property type="entry name" value="HTH_tscrpt_reg_MntR"/>
</dbReference>
<dbReference type="InterPro" id="IPR022689">
    <property type="entry name" value="Iron_dep_repressor"/>
</dbReference>
<dbReference type="InterPro" id="IPR036388">
    <property type="entry name" value="WH-like_DNA-bd_sf"/>
</dbReference>
<dbReference type="InterPro" id="IPR036390">
    <property type="entry name" value="WH_DNA-bd_sf"/>
</dbReference>
<dbReference type="NCBIfam" id="NF003025">
    <property type="entry name" value="PRK03902.1"/>
    <property type="match status" value="1"/>
</dbReference>
<dbReference type="PANTHER" id="PTHR33238">
    <property type="entry name" value="IRON (METAL) DEPENDENT REPRESSOR, DTXR FAMILY"/>
    <property type="match status" value="1"/>
</dbReference>
<dbReference type="PANTHER" id="PTHR33238:SF11">
    <property type="entry name" value="TRANSCRIPTIONAL REGULATOR MNTR"/>
    <property type="match status" value="1"/>
</dbReference>
<dbReference type="Pfam" id="PF02742">
    <property type="entry name" value="Fe_dep_repr_C"/>
    <property type="match status" value="1"/>
</dbReference>
<dbReference type="Pfam" id="PF01325">
    <property type="entry name" value="Fe_dep_repress"/>
    <property type="match status" value="1"/>
</dbReference>
<dbReference type="SMART" id="SM00529">
    <property type="entry name" value="HTH_DTXR"/>
    <property type="match status" value="1"/>
</dbReference>
<dbReference type="SUPFAM" id="SSF47979">
    <property type="entry name" value="Iron-dependent repressor protein, dimerization domain"/>
    <property type="match status" value="1"/>
</dbReference>
<dbReference type="SUPFAM" id="SSF46785">
    <property type="entry name" value="Winged helix' DNA-binding domain"/>
    <property type="match status" value="1"/>
</dbReference>
<dbReference type="PROSITE" id="PS50944">
    <property type="entry name" value="HTH_DTXR"/>
    <property type="match status" value="1"/>
</dbReference>
<organism>
    <name type="scientific">Bacillus velezensis (strain DSM 23117 / BGSC 10A6 / LMG 26770 / FZB42)</name>
    <name type="common">Bacillus amyloliquefaciens subsp. plantarum</name>
    <dbReference type="NCBI Taxonomy" id="326423"/>
    <lineage>
        <taxon>Bacteria</taxon>
        <taxon>Bacillati</taxon>
        <taxon>Bacillota</taxon>
        <taxon>Bacilli</taxon>
        <taxon>Bacillales</taxon>
        <taxon>Bacillaceae</taxon>
        <taxon>Bacillus</taxon>
        <taxon>Bacillus amyloliquefaciens group</taxon>
    </lineage>
</organism>
<proteinExistence type="inferred from homology"/>
<protein>
    <recommendedName>
        <fullName evidence="1">HTH-type transcriptional regulator MntR</fullName>
    </recommendedName>
    <alternativeName>
        <fullName evidence="1">Manganese transport regulator</fullName>
    </alternativeName>
</protein>
<sequence length="142" mass="16656">MTTPSMEDYIEQIYMLIEEKGYARVSDIAEALAVHPSSVTKMVQKLDKDEYLIYEKYRGLVLTSKGKKIGKRLVYRHELLEQFLRIIGVDEEKIYNDVEGIEHHLSWNSIDRIGDLVQYFEDDESRKKELKSVQKKTENPGE</sequence>
<reference key="1">
    <citation type="journal article" date="2007" name="Nat. Biotechnol.">
        <title>Comparative analysis of the complete genome sequence of the plant growth-promoting bacterium Bacillus amyloliquefaciens FZB42.</title>
        <authorList>
            <person name="Chen X.H."/>
            <person name="Koumoutsi A."/>
            <person name="Scholz R."/>
            <person name="Eisenreich A."/>
            <person name="Schneider K."/>
            <person name="Heinemeyer I."/>
            <person name="Morgenstern B."/>
            <person name="Voss B."/>
            <person name="Hess W.R."/>
            <person name="Reva O."/>
            <person name="Junge H."/>
            <person name="Voigt B."/>
            <person name="Jungblut P.R."/>
            <person name="Vater J."/>
            <person name="Suessmuth R."/>
            <person name="Liesegang H."/>
            <person name="Strittmatter A."/>
            <person name="Gottschalk G."/>
            <person name="Borriss R."/>
        </authorList>
    </citation>
    <scope>NUCLEOTIDE SEQUENCE [LARGE SCALE GENOMIC DNA]</scope>
    <source>
        <strain>DSM 23117 / BGSC 10A6 / LMG 26770 / FZB42</strain>
    </source>
</reference>